<evidence type="ECO:0000269" key="1">
    <source>
    </source>
</evidence>
<evidence type="ECO:0000303" key="2">
    <source>
    </source>
</evidence>
<evidence type="ECO:0000303" key="3">
    <source>
    </source>
</evidence>
<evidence type="ECO:0000305" key="4">
    <source>
    </source>
</evidence>
<reference key="1">
    <citation type="journal article" date="1981" name="Dokl. Biochem.">
        <title>Primary structure of the RNA polymerase of Escherichia coli. Nucleotide sequence of the rpoC gene and amino acid sequence of the beta'-subunit.</title>
        <authorList>
            <person name="Ovchinnikov Y.A."/>
            <person name="Monastyrskaya G.S."/>
            <person name="Gubanov V.V."/>
            <person name="Guryev S.O."/>
            <person name="Salomatina I.S."/>
            <person name="Shuvaeva T.M."/>
            <person name="Lipkin V.M."/>
            <person name="Sverdlov E.D."/>
        </authorList>
    </citation>
    <scope>NUCLEOTIDE SEQUENCE [GENOMIC DNA]</scope>
</reference>
<reference key="2">
    <citation type="journal article" date="1993" name="Nucleic Acids Res.">
        <title>Analysis of the Escherichia coli genome. IV. DNA sequence of the region from 89.2 to 92.8 minutes.</title>
        <authorList>
            <person name="Blattner F.R."/>
            <person name="Burland V.D."/>
            <person name="Plunkett G. III"/>
            <person name="Sofia H.J."/>
            <person name="Daniels D.L."/>
        </authorList>
    </citation>
    <scope>NUCLEOTIDE SEQUENCE [LARGE SCALE GENOMIC DNA]</scope>
    <source>
        <strain>K12 / MG1655 / ATCC 47076</strain>
    </source>
</reference>
<reference key="3">
    <citation type="journal article" date="1997" name="Science">
        <title>The complete genome sequence of Escherichia coli K-12.</title>
        <authorList>
            <person name="Blattner F.R."/>
            <person name="Plunkett G. III"/>
            <person name="Bloch C.A."/>
            <person name="Perna N.T."/>
            <person name="Burland V."/>
            <person name="Riley M."/>
            <person name="Collado-Vides J."/>
            <person name="Glasner J.D."/>
            <person name="Rode C.K."/>
            <person name="Mayhew G.F."/>
            <person name="Gregor J."/>
            <person name="Davis N.W."/>
            <person name="Kirkpatrick H.A."/>
            <person name="Goeden M.A."/>
            <person name="Rose D.J."/>
            <person name="Mau B."/>
            <person name="Shao Y."/>
        </authorList>
    </citation>
    <scope>NUCLEOTIDE SEQUENCE [LARGE SCALE GENOMIC DNA]</scope>
    <source>
        <strain>K12 / MG1655 / ATCC 47076</strain>
    </source>
</reference>
<reference key="4">
    <citation type="journal article" date="2006" name="Mol. Syst. Biol.">
        <title>Highly accurate genome sequences of Escherichia coli K-12 strains MG1655 and W3110.</title>
        <authorList>
            <person name="Hayashi K."/>
            <person name="Morooka N."/>
            <person name="Yamamoto Y."/>
            <person name="Fujita K."/>
            <person name="Isono K."/>
            <person name="Choi S."/>
            <person name="Ohtsubo E."/>
            <person name="Baba T."/>
            <person name="Wanner B.L."/>
            <person name="Mori H."/>
            <person name="Horiuchi T."/>
        </authorList>
    </citation>
    <scope>NUCLEOTIDE SEQUENCE [LARGE SCALE GENOMIC DNA]</scope>
    <source>
        <strain>K12 / W3110 / ATCC 27325 / DSM 5911</strain>
    </source>
</reference>
<reference key="5">
    <citation type="journal article" date="1990" name="J. Bacteriol.">
        <title>A new Escherichia coli heat shock gene, htrC, whose product is essential for viability only at high temperatures.</title>
        <authorList>
            <person name="Raina S."/>
            <person name="Georgopoulos C."/>
        </authorList>
    </citation>
    <scope>DISRUPTION PHENOTYPE</scope>
    <source>
        <strain>CA8000</strain>
        <strain>W3101</strain>
    </source>
</reference>
<reference key="6">
    <citation type="journal article" date="2006" name="J. Bacteriol.">
        <title>The Escherichia coli rpoS-dependent htrC gene is not involved in the heat shock response.</title>
        <authorList>
            <person name="Thacker Z."/>
            <person name="Darmon E."/>
            <person name="Keppel F."/>
            <person name="Masters M."/>
        </authorList>
    </citation>
    <scope>INDUCTION</scope>
    <scope>DISRUPTION PHENOTYPE</scope>
    <source>
        <strain>CA8000</strain>
        <strain>K12 / MG1655 / ATCC 47076</strain>
    </source>
</reference>
<sequence length="179" mass="21131">MKQEVEKWRPFGHPDGDIRDLSFLDAHQAVYVQHHEGKEPLEYRFWVTYSLHCFTKDYEHQTNEEKQSLMYHAPKESRPFCQHRYNLARTHLKRTILALPESNVIHAGYGSYAVIEVDLDGGDKAFYFVAFRAFREKKKLRLHVTSAYPISEKQKGKSVKFFTIAYNLLRNKQLPQPSK</sequence>
<accession>P27375</accession>
<accession>Q2M8S5</accession>
<gene>
    <name evidence="2" type="primary">yjaZ</name>
    <name evidence="3" type="synonym">htrC</name>
    <name type="ordered locus">b3989</name>
    <name type="ordered locus">JW3952</name>
</gene>
<dbReference type="EMBL" id="V00339">
    <property type="status" value="NOT_ANNOTATED_CDS"/>
    <property type="molecule type" value="Genomic_DNA"/>
</dbReference>
<dbReference type="EMBL" id="U00006">
    <property type="protein sequence ID" value="AAC43087.1"/>
    <property type="molecule type" value="Genomic_DNA"/>
</dbReference>
<dbReference type="EMBL" id="U00096">
    <property type="protein sequence ID" value="AAC76963.1"/>
    <property type="molecule type" value="Genomic_DNA"/>
</dbReference>
<dbReference type="EMBL" id="AP009048">
    <property type="protein sequence ID" value="BAE77331.1"/>
    <property type="molecule type" value="Genomic_DNA"/>
</dbReference>
<dbReference type="PIR" id="H65205">
    <property type="entry name" value="H65205"/>
</dbReference>
<dbReference type="RefSeq" id="NP_418416.1">
    <property type="nucleotide sequence ID" value="NC_000913.3"/>
</dbReference>
<dbReference type="RefSeq" id="WP_001307500.1">
    <property type="nucleotide sequence ID" value="NZ_STEB01000045.1"/>
</dbReference>
<dbReference type="BioGRID" id="4261333">
    <property type="interactions" value="197"/>
</dbReference>
<dbReference type="STRING" id="511145.b3989"/>
<dbReference type="PaxDb" id="511145-b3989"/>
<dbReference type="EnsemblBacteria" id="AAC76963">
    <property type="protein sequence ID" value="AAC76963"/>
    <property type="gene ID" value="b3989"/>
</dbReference>
<dbReference type="GeneID" id="948495"/>
<dbReference type="KEGG" id="ecj:JW3952"/>
<dbReference type="KEGG" id="eco:b3989"/>
<dbReference type="KEGG" id="ecoc:C3026_21545"/>
<dbReference type="PATRIC" id="fig|1411691.4.peg.2723"/>
<dbReference type="EchoBASE" id="EB1399"/>
<dbReference type="eggNOG" id="ENOG5031ZPH">
    <property type="taxonomic scope" value="Bacteria"/>
</dbReference>
<dbReference type="HOGENOM" id="CLU_122765_0_0_6"/>
<dbReference type="InParanoid" id="P27375"/>
<dbReference type="OMA" id="SIMTPTY"/>
<dbReference type="OrthoDB" id="514079at2"/>
<dbReference type="BioCyc" id="EcoCyc:EG11429-MONOMER"/>
<dbReference type="PRO" id="PR:P27375"/>
<dbReference type="Proteomes" id="UP000000625">
    <property type="component" value="Chromosome"/>
</dbReference>
<dbReference type="NCBIfam" id="NF007263">
    <property type="entry name" value="PRK09717.1"/>
    <property type="match status" value="1"/>
</dbReference>
<organism>
    <name type="scientific">Escherichia coli (strain K12)</name>
    <dbReference type="NCBI Taxonomy" id="83333"/>
    <lineage>
        <taxon>Bacteria</taxon>
        <taxon>Pseudomonadati</taxon>
        <taxon>Pseudomonadota</taxon>
        <taxon>Gammaproteobacteria</taxon>
        <taxon>Enterobacterales</taxon>
        <taxon>Enterobacteriaceae</taxon>
        <taxon>Escherichia</taxon>
    </lineage>
</organism>
<name>YJAZ_ECOLI</name>
<proteinExistence type="evidence at transcript level"/>
<protein>
    <recommendedName>
        <fullName evidence="2">Protein YjaZ</fullName>
    </recommendedName>
    <alternativeName>
        <fullName evidence="3">Heat shock protein C</fullName>
    </alternativeName>
</protein>
<comment type="induction">
    <text evidence="1">Expression increases about 5-fold as cells approach stationary phase, under control of sigma factor S (rpoS).</text>
</comment>
<comment type="disruption phenotype">
    <text evidence="1">Cells grow normally at 30, 37 and 43 degrees Celsius. They have a slightly slower growth phenotype as they enter stationary phase.</text>
</comment>
<comment type="caution">
    <text evidence="1 4">Was originally thought to be a heat shock protein. However upon further examination the original mutants do not have a deletion in this gene (PubMed:16980444).</text>
</comment>
<feature type="chain" id="PRO_0000084086" description="Protein YjaZ">
    <location>
        <begin position="1"/>
        <end position="179"/>
    </location>
</feature>
<keyword id="KW-1185">Reference proteome</keyword>